<name>PHOSP_SVCV</name>
<organism>
    <name type="scientific">Spring viremia of carp virus</name>
    <name type="common">Rhabdovirus carpia</name>
    <dbReference type="NCBI Taxonomy" id="696863"/>
    <lineage>
        <taxon>Viruses</taxon>
        <taxon>Riboviria</taxon>
        <taxon>Orthornavirae</taxon>
        <taxon>Negarnaviricota</taxon>
        <taxon>Haploviricotina</taxon>
        <taxon>Monjiviricetes</taxon>
        <taxon>Mononegavirales</taxon>
        <taxon>Rhabdoviridae</taxon>
        <taxon>Alpharhabdovirinae</taxon>
        <taxon>Sprivivirus</taxon>
    </lineage>
</organism>
<keyword id="KW-0143">Chaperone</keyword>
<keyword id="KW-1035">Host cytoplasm</keyword>
<keyword id="KW-0597">Phosphoprotein</keyword>
<keyword id="KW-1185">Reference proteome</keyword>
<keyword id="KW-0693">Viral RNA replication</keyword>
<keyword id="KW-1195">Viral transcription</keyword>
<keyword id="KW-0946">Virion</keyword>
<accession>Q91DS2</accession>
<feature type="chain" id="PRO_0000287351" description="Phosphoprotein">
    <location>
        <begin position="1"/>
        <end position="309"/>
    </location>
</feature>
<feature type="region of interest" description="Disordered" evidence="2">
    <location>
        <begin position="38"/>
        <end position="98"/>
    </location>
</feature>
<feature type="compositionally biased region" description="Acidic residues" evidence="2">
    <location>
        <begin position="47"/>
        <end position="66"/>
    </location>
</feature>
<feature type="compositionally biased region" description="Acidic residues" evidence="2">
    <location>
        <begin position="82"/>
        <end position="94"/>
    </location>
</feature>
<feature type="modified residue" description="Phosphotyrosine; by host" evidence="1">
    <location>
        <position position="14"/>
    </location>
</feature>
<feature type="modified residue" description="Phosphoserine; by host" evidence="1">
    <location>
        <position position="272"/>
    </location>
</feature>
<protein>
    <recommendedName>
        <fullName>Phosphoprotein</fullName>
        <shortName>P protein</shortName>
        <shortName>Protein P</shortName>
    </recommendedName>
    <alternativeName>
        <fullName>Protein M1</fullName>
    </alternativeName>
</protein>
<proteinExistence type="evidence at protein level"/>
<gene>
    <name type="primary">P</name>
</gene>
<comment type="function">
    <text evidence="1">Essential component of the RNA polymerase transcription and replication complex. Binds the viral ribonucleocapsid and positions the L polymerase on the template. May act as a chaperone for newly synthesized free N protein, so-called N(0). Plays a role in virion assembly.</text>
</comment>
<comment type="subunit">
    <text evidence="1 3">Homotrimer. This trimer is stabilized by binding to the L protein. Binds N(0), and N in ribonucleocapsid (By similarity). May bind to host ref(2)P (PubMed:7684462).</text>
</comment>
<comment type="subcellular location">
    <subcellularLocation>
        <location evidence="1">Virion</location>
    </subcellularLocation>
    <subcellularLocation>
        <location evidence="1">Host cytoplasm</location>
    </subcellularLocation>
</comment>
<comment type="PTM">
    <text evidence="1">Phosphorylated by host kinases. Phosphorylation play an important role in facilitating trimerization and possibly P-L complex formation.</text>
</comment>
<comment type="similarity">
    <text evidence="4">Belongs to the vesiculovirus protein P family.</text>
</comment>
<organismHost>
    <name type="scientific">Cyprinus carpio</name>
    <name type="common">Common carp</name>
    <dbReference type="NCBI Taxonomy" id="7962"/>
</organismHost>
<dbReference type="EMBL" id="AJ318079">
    <property type="protein sequence ID" value="CAC51334.1"/>
    <property type="molecule type" value="Genomic_RNA"/>
</dbReference>
<dbReference type="SMR" id="Q91DS2"/>
<dbReference type="Proteomes" id="UP000007541">
    <property type="component" value="Genome"/>
</dbReference>
<dbReference type="GO" id="GO:0030430">
    <property type="term" value="C:host cell cytoplasm"/>
    <property type="evidence" value="ECO:0007669"/>
    <property type="project" value="UniProtKB-SubCell"/>
</dbReference>
<dbReference type="GO" id="GO:0044423">
    <property type="term" value="C:virion component"/>
    <property type="evidence" value="ECO:0007669"/>
    <property type="project" value="UniProtKB-KW"/>
</dbReference>
<dbReference type="GO" id="GO:0019083">
    <property type="term" value="P:viral transcription"/>
    <property type="evidence" value="ECO:0007669"/>
    <property type="project" value="UniProtKB-KW"/>
</dbReference>
<dbReference type="Gene3D" id="1.10.8.440">
    <property type="entry name" value="Vesicular stomatitis virus phosphoprotein C-terminal domain"/>
    <property type="match status" value="1"/>
</dbReference>
<dbReference type="InterPro" id="IPR043036">
    <property type="entry name" value="Phosphoprotein_C_viral"/>
</dbReference>
<sequence length="309" mass="35513">MSLHSKLSESLKAYADLDKTVKEIEEQVSSMEEPVPKTVKYVTFEENLSEEEWESDSGDDDEDSIDDSLIPDYLRESSSITVDEDEEDQKEDMEEHLPTVSWEEEPTGIDIGFGPGIVMPSVSNHEGGTYVRYNGLGGVDPNCKDLISKMMRSLIGQIGNKYGYDIDLFDYQGDFLEVFLPHKPSKEDVRPDIRIGKKNEEGTSKQVSKPRGKEKIVLKTGDECGRFPMNKEAKKREPEGLWEVMKVLSVQFDPWKEDEPPLSLTIRDLFISESEFRLHCNHSQTEREMALVGIKLRRLYNKLYQKYRL</sequence>
<evidence type="ECO:0000250" key="1">
    <source>
        <dbReference type="UniProtKB" id="P03520"/>
    </source>
</evidence>
<evidence type="ECO:0000256" key="2">
    <source>
        <dbReference type="SAM" id="MobiDB-lite"/>
    </source>
</evidence>
<evidence type="ECO:0000269" key="3">
    <source>
    </source>
</evidence>
<evidence type="ECO:0000305" key="4"/>
<reference key="1">
    <citation type="journal article" date="2002" name="Virus Res.">
        <title>Determination of the complete genomic sequence and analysis of the gene products of the virus of Spring Viremia of Carp, a fish rhabdovirus.</title>
        <authorList>
            <person name="Hoffmann B."/>
            <person name="Schutze H."/>
            <person name="Mettenleiter T.C."/>
        </authorList>
    </citation>
    <scope>NUCLEOTIDE SEQUENCE [GENOMIC RNA]</scope>
    <source>
        <strain>Fijan reference</strain>
    </source>
</reference>
<reference key="2">
    <citation type="journal article" date="1993" name="J. Virol.">
        <title>Immunological cross-reactions and interactions between the Drosophila melanogaster ref(2)P protein and sigma rhabdovirus proteins.</title>
        <authorList>
            <person name="Wyers F."/>
            <person name="Dru P."/>
            <person name="Simonet B."/>
            <person name="Contamine D."/>
        </authorList>
    </citation>
    <scope>INTERACTION WITH HOST REF(2)P</scope>
</reference>